<feature type="chain" id="PRO_0000120465" description="Glutamate-1-semialdehyde 2,1-aminomutase">
    <location>
        <begin position="1"/>
        <end position="431"/>
    </location>
</feature>
<feature type="modified residue" description="N6-(pyridoxal phosphate)lysine" evidence="1">
    <location>
        <position position="265"/>
    </location>
</feature>
<comment type="catalytic activity">
    <reaction evidence="1">
        <text>(S)-4-amino-5-oxopentanoate = 5-aminolevulinate</text>
        <dbReference type="Rhea" id="RHEA:14265"/>
        <dbReference type="ChEBI" id="CHEBI:57501"/>
        <dbReference type="ChEBI" id="CHEBI:356416"/>
        <dbReference type="EC" id="5.4.3.8"/>
    </reaction>
</comment>
<comment type="cofactor">
    <cofactor evidence="1">
        <name>pyridoxal 5'-phosphate</name>
        <dbReference type="ChEBI" id="CHEBI:597326"/>
    </cofactor>
</comment>
<comment type="pathway">
    <text evidence="1">Porphyrin-containing compound metabolism; protoporphyrin-IX biosynthesis; 5-aminolevulinate from L-glutamyl-tRNA(Glu): step 2/2.</text>
</comment>
<comment type="subunit">
    <text evidence="1">Homodimer.</text>
</comment>
<comment type="subcellular location">
    <subcellularLocation>
        <location evidence="1">Cytoplasm</location>
    </subcellularLocation>
</comment>
<comment type="similarity">
    <text evidence="1">Belongs to the class-III pyridoxal-phosphate-dependent aminotransferase family. HemL subfamily.</text>
</comment>
<keyword id="KW-0963">Cytoplasm</keyword>
<keyword id="KW-0413">Isomerase</keyword>
<keyword id="KW-0627">Porphyrin biosynthesis</keyword>
<keyword id="KW-0663">Pyridoxal phosphate</keyword>
<dbReference type="EC" id="5.4.3.8" evidence="1"/>
<dbReference type="EMBL" id="BA000031">
    <property type="protein sequence ID" value="BAC60738.1"/>
    <property type="molecule type" value="Genomic_DNA"/>
</dbReference>
<dbReference type="RefSeq" id="NP_798854.1">
    <property type="nucleotide sequence ID" value="NC_004603.1"/>
</dbReference>
<dbReference type="RefSeq" id="WP_005479079.1">
    <property type="nucleotide sequence ID" value="NC_004603.1"/>
</dbReference>
<dbReference type="SMR" id="Q87LY3"/>
<dbReference type="GeneID" id="1189990"/>
<dbReference type="KEGG" id="vpa:VP2475"/>
<dbReference type="PATRIC" id="fig|223926.6.peg.2375"/>
<dbReference type="eggNOG" id="COG0001">
    <property type="taxonomic scope" value="Bacteria"/>
</dbReference>
<dbReference type="HOGENOM" id="CLU_016922_1_5_6"/>
<dbReference type="UniPathway" id="UPA00251">
    <property type="reaction ID" value="UER00317"/>
</dbReference>
<dbReference type="Proteomes" id="UP000002493">
    <property type="component" value="Chromosome 1"/>
</dbReference>
<dbReference type="GO" id="GO:0005737">
    <property type="term" value="C:cytoplasm"/>
    <property type="evidence" value="ECO:0007669"/>
    <property type="project" value="UniProtKB-SubCell"/>
</dbReference>
<dbReference type="GO" id="GO:0042286">
    <property type="term" value="F:glutamate-1-semialdehyde 2,1-aminomutase activity"/>
    <property type="evidence" value="ECO:0007669"/>
    <property type="project" value="UniProtKB-UniRule"/>
</dbReference>
<dbReference type="GO" id="GO:0030170">
    <property type="term" value="F:pyridoxal phosphate binding"/>
    <property type="evidence" value="ECO:0007669"/>
    <property type="project" value="InterPro"/>
</dbReference>
<dbReference type="GO" id="GO:0008483">
    <property type="term" value="F:transaminase activity"/>
    <property type="evidence" value="ECO:0007669"/>
    <property type="project" value="InterPro"/>
</dbReference>
<dbReference type="GO" id="GO:0006782">
    <property type="term" value="P:protoporphyrinogen IX biosynthetic process"/>
    <property type="evidence" value="ECO:0007669"/>
    <property type="project" value="UniProtKB-UniRule"/>
</dbReference>
<dbReference type="CDD" id="cd00610">
    <property type="entry name" value="OAT_like"/>
    <property type="match status" value="1"/>
</dbReference>
<dbReference type="FunFam" id="3.40.640.10:FF:000021">
    <property type="entry name" value="Glutamate-1-semialdehyde 2,1-aminomutase"/>
    <property type="match status" value="1"/>
</dbReference>
<dbReference type="FunFam" id="3.90.1150.10:FF:000012">
    <property type="entry name" value="Glutamate-1-semialdehyde 2,1-aminomutase"/>
    <property type="match status" value="1"/>
</dbReference>
<dbReference type="Gene3D" id="3.90.1150.10">
    <property type="entry name" value="Aspartate Aminotransferase, domain 1"/>
    <property type="match status" value="1"/>
</dbReference>
<dbReference type="Gene3D" id="3.40.640.10">
    <property type="entry name" value="Type I PLP-dependent aspartate aminotransferase-like (Major domain)"/>
    <property type="match status" value="1"/>
</dbReference>
<dbReference type="HAMAP" id="MF_00375">
    <property type="entry name" value="HemL_aminotrans_3"/>
    <property type="match status" value="1"/>
</dbReference>
<dbReference type="InterPro" id="IPR004639">
    <property type="entry name" value="4pyrrol_synth_GluAld_NH2Trfase"/>
</dbReference>
<dbReference type="InterPro" id="IPR005814">
    <property type="entry name" value="Aminotrans_3"/>
</dbReference>
<dbReference type="InterPro" id="IPR049704">
    <property type="entry name" value="Aminotrans_3_PPA_site"/>
</dbReference>
<dbReference type="InterPro" id="IPR015424">
    <property type="entry name" value="PyrdxlP-dep_Trfase"/>
</dbReference>
<dbReference type="InterPro" id="IPR015421">
    <property type="entry name" value="PyrdxlP-dep_Trfase_major"/>
</dbReference>
<dbReference type="InterPro" id="IPR015422">
    <property type="entry name" value="PyrdxlP-dep_Trfase_small"/>
</dbReference>
<dbReference type="NCBIfam" id="TIGR00713">
    <property type="entry name" value="hemL"/>
    <property type="match status" value="1"/>
</dbReference>
<dbReference type="NCBIfam" id="NF000818">
    <property type="entry name" value="PRK00062.1"/>
    <property type="match status" value="1"/>
</dbReference>
<dbReference type="PANTHER" id="PTHR43713">
    <property type="entry name" value="GLUTAMATE-1-SEMIALDEHYDE 2,1-AMINOMUTASE"/>
    <property type="match status" value="1"/>
</dbReference>
<dbReference type="PANTHER" id="PTHR43713:SF3">
    <property type="entry name" value="GLUTAMATE-1-SEMIALDEHYDE 2,1-AMINOMUTASE 1, CHLOROPLASTIC-RELATED"/>
    <property type="match status" value="1"/>
</dbReference>
<dbReference type="Pfam" id="PF00202">
    <property type="entry name" value="Aminotran_3"/>
    <property type="match status" value="1"/>
</dbReference>
<dbReference type="SUPFAM" id="SSF53383">
    <property type="entry name" value="PLP-dependent transferases"/>
    <property type="match status" value="1"/>
</dbReference>
<dbReference type="PROSITE" id="PS00600">
    <property type="entry name" value="AA_TRANSFER_CLASS_3"/>
    <property type="match status" value="1"/>
</dbReference>
<protein>
    <recommendedName>
        <fullName evidence="1">Glutamate-1-semialdehyde 2,1-aminomutase</fullName>
        <shortName evidence="1">GSA</shortName>
        <ecNumber evidence="1">5.4.3.8</ecNumber>
    </recommendedName>
    <alternativeName>
        <fullName evidence="1">Glutamate-1-semialdehyde aminotransferase</fullName>
        <shortName evidence="1">GSA-AT</shortName>
    </alternativeName>
</protein>
<gene>
    <name evidence="1" type="primary">hemL</name>
    <name type="ordered locus">VP2475</name>
</gene>
<reference key="1">
    <citation type="journal article" date="2003" name="Lancet">
        <title>Genome sequence of Vibrio parahaemolyticus: a pathogenic mechanism distinct from that of V. cholerae.</title>
        <authorList>
            <person name="Makino K."/>
            <person name="Oshima K."/>
            <person name="Kurokawa K."/>
            <person name="Yokoyama K."/>
            <person name="Uda T."/>
            <person name="Tagomori K."/>
            <person name="Iijima Y."/>
            <person name="Najima M."/>
            <person name="Nakano M."/>
            <person name="Yamashita A."/>
            <person name="Kubota Y."/>
            <person name="Kimura S."/>
            <person name="Yasunaga T."/>
            <person name="Honda T."/>
            <person name="Shinagawa H."/>
            <person name="Hattori M."/>
            <person name="Iida T."/>
        </authorList>
    </citation>
    <scope>NUCLEOTIDE SEQUENCE [LARGE SCALE GENOMIC DNA]</scope>
    <source>
        <strain>RIMD 2210633</strain>
    </source>
</reference>
<evidence type="ECO:0000255" key="1">
    <source>
        <dbReference type="HAMAP-Rule" id="MF_00375"/>
    </source>
</evidence>
<proteinExistence type="inferred from homology"/>
<organism>
    <name type="scientific">Vibrio parahaemolyticus serotype O3:K6 (strain RIMD 2210633)</name>
    <dbReference type="NCBI Taxonomy" id="223926"/>
    <lineage>
        <taxon>Bacteria</taxon>
        <taxon>Pseudomonadati</taxon>
        <taxon>Pseudomonadota</taxon>
        <taxon>Gammaproteobacteria</taxon>
        <taxon>Vibrionales</taxon>
        <taxon>Vibrionaceae</taxon>
        <taxon>Vibrio</taxon>
    </lineage>
</organism>
<accession>Q87LY3</accession>
<name>GSA_VIBPA</name>
<sequence length="431" mass="45957">MTKSSELYQKAQQTIPGGVNSPVRAFNGVGGSPLFIERADGALIFDADGRAYIDYVGSWGPMILGHNHAVIREAVIDAAQRGLSFGAPTEMEIAMAELVSELVPSMEQIRMVSSGTEATMSAIRLARGFTGRDKIMKFEGCYHGHADSLLVKAGSGALTLGQPSSPGVPADFAKHTLTATFNDLDSVRELFAANKGEIACIIVEPVAGNMNCIPPVEGFHEGLREICDQEGALLIFDEVMTGFRVALGGAQAHYNIKPDLTTLGKVIGGGMPVGAFGGRKEVMQYVAPTGPVYQAGTLSGNPVAMAAGFACLNLLKEEGNEKRLASKTKQLADGFKSLAEKHGIPLVVNQVGGMFGFFFTDQETVTCYEDVTKCDIERFKRFFHLMLDHGVYLAPSAFEASFTSLAHGSKEIDATLEAADRCFAIIAAEAK</sequence>